<proteinExistence type="inferred from homology"/>
<organismHost>
    <name type="scientific">Bos taurus</name>
    <name type="common">Bovine</name>
    <dbReference type="NCBI Taxonomy" id="9913"/>
</organismHost>
<name>GI_BHV1S</name>
<comment type="function">
    <text>In epithelial cells, the heterodimer gE/gI is required for the cell-to-cell spread of the virus, by sorting nascent virions to cell junctions. Once the virus reaches the cell junctions, virus particles can spread to adjacent cells extremely rapidly through interactions with cellular receptors that accumulate at these junctions. Implicated in basolateral spread in polarized cells. In neuronal cells, gE/gI is essential for the anterograde spread of the infection throughout the host nervous system. Together with US9, the heterodimer gE/gI is involved in the sorting and transport of viral structural components toward axon tips.</text>
</comment>
<comment type="subunit">
    <text evidence="1">Interacts with gE.</text>
</comment>
<comment type="subcellular location">
    <subcellularLocation>
        <location evidence="1">Virion membrane</location>
        <topology evidence="1">Single-pass membrane protein</topology>
    </subcellularLocation>
    <subcellularLocation>
        <location evidence="4">Host cell membrane</location>
        <topology evidence="4">Single-pass type I membrane protein</topology>
    </subcellularLocation>
    <subcellularLocation>
        <location evidence="1">Host cell junction</location>
    </subcellularLocation>
    <subcellularLocation>
        <location evidence="1">Host Golgi apparatus membrane</location>
        <topology evidence="1">Single-pass type I membrane protein</topology>
    </subcellularLocation>
    <text evidence="1">During virion morphogenesis, this protein probably accumulates in the endosomes and trans-Golgi where secondary envelopment occurs. It is probably transported to the cell surface from where it is endocytosed and directed to the trans-Golgi network (TGN). The heterodimer gE/gI then redistribute to cell junctions to promote cell-cell spread later in the infection (By similarity).</text>
</comment>
<comment type="similarity">
    <text evidence="4">Belongs to the alphaherpesvirinae glycoprotein I family.</text>
</comment>
<evidence type="ECO:0000250" key="1"/>
<evidence type="ECO:0000255" key="2"/>
<evidence type="ECO:0000256" key="3">
    <source>
        <dbReference type="SAM" id="MobiDB-lite"/>
    </source>
</evidence>
<evidence type="ECO:0000305" key="4"/>
<protein>
    <recommendedName>
        <fullName>Envelope glycoprotein I</fullName>
        <shortName>gI</shortName>
    </recommendedName>
</protein>
<sequence>MRCLLLWMVVLAARAAPARSLVYRGEAVGLRADGPVAFAVHPTDATLALRGRLIFLEHQLPAGRRYNGTVELLRYHAAGDCFVMLQTTAFASCPRVANNAFRSCLHADTRPARSERRASAAVENHVLFSIARPRPIDSGLYFLRVGIYGGTAGSERRRDVFPLAAFVHSFGEPGDPEAAARTPAPSRQSRPAASGLTSSASLYDRALARSPQAPPPRPAPPRAARAGPRRPERVDETTEVEAATRAGSAFALTTPPAGPTASPAASPSRAFSAAAPAAAAQPAGDTPARFRRQLASILVPLCVLVLLLLALCAATVNCALRRRLLPCSRRVYKPRTCAACGSGTCAGRPPCRGAAPSAPATVVALGSRPKAPPLATISEE</sequence>
<keyword id="KW-0325">Glycoprotein</keyword>
<keyword id="KW-1031">Host cell junction</keyword>
<keyword id="KW-1032">Host cell membrane</keyword>
<keyword id="KW-1040">Host Golgi apparatus</keyword>
<keyword id="KW-1043">Host membrane</keyword>
<keyword id="KW-0472">Membrane</keyword>
<keyword id="KW-0597">Phosphoprotein</keyword>
<keyword id="KW-0732">Signal</keyword>
<keyword id="KW-0812">Transmembrane</keyword>
<keyword id="KW-1133">Transmembrane helix</keyword>
<keyword id="KW-0261">Viral envelope protein</keyword>
<keyword id="KW-0946">Virion</keyword>
<dbReference type="EMBL" id="Z23068">
    <property type="protein sequence ID" value="CAA80605.1"/>
    <property type="molecule type" value="Genomic_DNA"/>
</dbReference>
<dbReference type="PIR" id="S35785">
    <property type="entry name" value="S35785"/>
</dbReference>
<dbReference type="GlyCosmos" id="Q08102">
    <property type="glycosylation" value="1 site, No reported glycans"/>
</dbReference>
<dbReference type="GO" id="GO:0043657">
    <property type="term" value="C:host cell"/>
    <property type="evidence" value="ECO:0007669"/>
    <property type="project" value="InterPro"/>
</dbReference>
<dbReference type="GO" id="GO:0044178">
    <property type="term" value="C:host cell Golgi membrane"/>
    <property type="evidence" value="ECO:0007669"/>
    <property type="project" value="UniProtKB-SubCell"/>
</dbReference>
<dbReference type="GO" id="GO:0044156">
    <property type="term" value="C:host cell junction"/>
    <property type="evidence" value="ECO:0007669"/>
    <property type="project" value="UniProtKB-SubCell"/>
</dbReference>
<dbReference type="GO" id="GO:0016020">
    <property type="term" value="C:membrane"/>
    <property type="evidence" value="ECO:0007669"/>
    <property type="project" value="UniProtKB-KW"/>
</dbReference>
<dbReference type="GO" id="GO:0019031">
    <property type="term" value="C:viral envelope"/>
    <property type="evidence" value="ECO:0007669"/>
    <property type="project" value="UniProtKB-KW"/>
</dbReference>
<dbReference type="GO" id="GO:0055036">
    <property type="term" value="C:virion membrane"/>
    <property type="evidence" value="ECO:0007669"/>
    <property type="project" value="UniProtKB-SubCell"/>
</dbReference>
<dbReference type="InterPro" id="IPR002874">
    <property type="entry name" value="Herpes_gI"/>
</dbReference>
<dbReference type="Pfam" id="PF01688">
    <property type="entry name" value="Herpes_gI"/>
    <property type="match status" value="1"/>
</dbReference>
<organism>
    <name type="scientific">Bovine herpesvirus 1.2 (strain ST)</name>
    <name type="common">BoHV-1</name>
    <name type="synonym">Infectious bovine rhinotracheitis virus</name>
    <dbReference type="NCBI Taxonomy" id="45407"/>
    <lineage>
        <taxon>Viruses</taxon>
        <taxon>Duplodnaviria</taxon>
        <taxon>Heunggongvirae</taxon>
        <taxon>Peploviricota</taxon>
        <taxon>Herviviricetes</taxon>
        <taxon>Herpesvirales</taxon>
        <taxon>Orthoherpesviridae</taxon>
        <taxon>Alphaherpesvirinae</taxon>
        <taxon>Varicellovirus</taxon>
        <taxon>Varicellovirus bovinealpha1</taxon>
    </lineage>
</organism>
<reference key="1">
    <citation type="journal article" date="1994" name="Virology">
        <title>The complete DNA sequence and the genetic organization of the short unique region (US) of the bovine herpesvirus type 1 (ST strain).</title>
        <authorList>
            <person name="Leung-Tack P."/>
            <person name="Audonnet J.F."/>
            <person name="Riviere M."/>
        </authorList>
    </citation>
    <scope>NUCLEOTIDE SEQUENCE [GENOMIC DNA]</scope>
</reference>
<gene>
    <name type="primary">gI</name>
</gene>
<accession>Q08102</accession>
<feature type="signal peptide" evidence="2">
    <location>
        <begin position="1"/>
        <end position="20"/>
    </location>
</feature>
<feature type="chain" id="PRO_0000115774" description="Envelope glycoprotein I">
    <location>
        <begin position="21"/>
        <end position="380"/>
    </location>
</feature>
<feature type="topological domain" description="Virion surface" evidence="2">
    <location>
        <begin position="21"/>
        <end position="293"/>
    </location>
</feature>
<feature type="transmembrane region" description="Helical" evidence="2">
    <location>
        <begin position="294"/>
        <end position="314"/>
    </location>
</feature>
<feature type="topological domain" description="Intravirion" evidence="2">
    <location>
        <begin position="315"/>
        <end position="380"/>
    </location>
</feature>
<feature type="region of interest" description="Disordered" evidence="3">
    <location>
        <begin position="172"/>
        <end position="269"/>
    </location>
</feature>
<feature type="compositionally biased region" description="Polar residues" evidence="3">
    <location>
        <begin position="185"/>
        <end position="201"/>
    </location>
</feature>
<feature type="compositionally biased region" description="Pro residues" evidence="3">
    <location>
        <begin position="212"/>
        <end position="221"/>
    </location>
</feature>
<feature type="compositionally biased region" description="Low complexity" evidence="3">
    <location>
        <begin position="249"/>
        <end position="269"/>
    </location>
</feature>
<feature type="glycosylation site" description="N-linked (GlcNAc...) asparagine; by host" evidence="2">
    <location>
        <position position="67"/>
    </location>
</feature>